<feature type="chain" id="PRO_1000051807" description="Photosystem I iron-sulfur center">
    <location>
        <begin position="1"/>
        <end position="81"/>
    </location>
</feature>
<feature type="domain" description="4Fe-4S ferredoxin-type 1" evidence="1">
    <location>
        <begin position="2"/>
        <end position="31"/>
    </location>
</feature>
<feature type="domain" description="4Fe-4S ferredoxin-type 2" evidence="1">
    <location>
        <begin position="37"/>
        <end position="68"/>
    </location>
</feature>
<feature type="binding site" evidence="1">
    <location>
        <position position="11"/>
    </location>
    <ligand>
        <name>[4Fe-4S] cluster</name>
        <dbReference type="ChEBI" id="CHEBI:49883"/>
        <label>1</label>
    </ligand>
</feature>
<feature type="binding site" evidence="1">
    <location>
        <position position="14"/>
    </location>
    <ligand>
        <name>[4Fe-4S] cluster</name>
        <dbReference type="ChEBI" id="CHEBI:49883"/>
        <label>1</label>
    </ligand>
</feature>
<feature type="binding site" evidence="1">
    <location>
        <position position="17"/>
    </location>
    <ligand>
        <name>[4Fe-4S] cluster</name>
        <dbReference type="ChEBI" id="CHEBI:49883"/>
        <label>1</label>
    </ligand>
</feature>
<feature type="binding site" evidence="1">
    <location>
        <position position="21"/>
    </location>
    <ligand>
        <name>[4Fe-4S] cluster</name>
        <dbReference type="ChEBI" id="CHEBI:49883"/>
        <label>2</label>
    </ligand>
</feature>
<feature type="binding site" evidence="1">
    <location>
        <position position="48"/>
    </location>
    <ligand>
        <name>[4Fe-4S] cluster</name>
        <dbReference type="ChEBI" id="CHEBI:49883"/>
        <label>2</label>
    </ligand>
</feature>
<feature type="binding site" evidence="1">
    <location>
        <position position="51"/>
    </location>
    <ligand>
        <name>[4Fe-4S] cluster</name>
        <dbReference type="ChEBI" id="CHEBI:49883"/>
        <label>2</label>
    </ligand>
</feature>
<feature type="binding site" evidence="1">
    <location>
        <position position="54"/>
    </location>
    <ligand>
        <name>[4Fe-4S] cluster</name>
        <dbReference type="ChEBI" id="CHEBI:49883"/>
        <label>2</label>
    </ligand>
</feature>
<feature type="binding site" evidence="1">
    <location>
        <position position="58"/>
    </location>
    <ligand>
        <name>[4Fe-4S] cluster</name>
        <dbReference type="ChEBI" id="CHEBI:49883"/>
        <label>1</label>
    </ligand>
</feature>
<proteinExistence type="inferred from homology"/>
<name>PSAC_SYNR3</name>
<organism>
    <name type="scientific">Synechococcus sp. (strain RCC307)</name>
    <dbReference type="NCBI Taxonomy" id="316278"/>
    <lineage>
        <taxon>Bacteria</taxon>
        <taxon>Bacillati</taxon>
        <taxon>Cyanobacteriota</taxon>
        <taxon>Cyanophyceae</taxon>
        <taxon>Synechococcales</taxon>
        <taxon>Synechococcaceae</taxon>
        <taxon>Synechococcus</taxon>
    </lineage>
</organism>
<protein>
    <recommendedName>
        <fullName evidence="1">Photosystem I iron-sulfur center</fullName>
        <ecNumber evidence="1">1.97.1.12</ecNumber>
    </recommendedName>
    <alternativeName>
        <fullName evidence="1">9 kDa polypeptide</fullName>
    </alternativeName>
    <alternativeName>
        <fullName evidence="1">PSI-C</fullName>
    </alternativeName>
    <alternativeName>
        <fullName evidence="1">Photosystem I subunit VII</fullName>
    </alternativeName>
    <alternativeName>
        <fullName evidence="1">PsaC</fullName>
    </alternativeName>
</protein>
<sequence>MSHSVKIYDTCIGCTQCVRACPLDVLEMVPWDGCKAGQIASSPRTEDCVGCKRCETACPTDFLSIRVYLGDETTRSMGLAY</sequence>
<gene>
    <name evidence="1" type="primary">psaC</name>
    <name type="ordered locus">SynRCC307_0133</name>
</gene>
<keyword id="KW-0004">4Fe-4S</keyword>
<keyword id="KW-0249">Electron transport</keyword>
<keyword id="KW-0408">Iron</keyword>
<keyword id="KW-0411">Iron-sulfur</keyword>
<keyword id="KW-0472">Membrane</keyword>
<keyword id="KW-0479">Metal-binding</keyword>
<keyword id="KW-0560">Oxidoreductase</keyword>
<keyword id="KW-0602">Photosynthesis</keyword>
<keyword id="KW-0603">Photosystem I</keyword>
<keyword id="KW-1185">Reference proteome</keyword>
<keyword id="KW-0677">Repeat</keyword>
<keyword id="KW-0793">Thylakoid</keyword>
<keyword id="KW-0813">Transport</keyword>
<accession>A5GQ77</accession>
<reference key="1">
    <citation type="submission" date="2006-05" db="EMBL/GenBank/DDBJ databases">
        <authorList>
            <consortium name="Genoscope"/>
        </authorList>
    </citation>
    <scope>NUCLEOTIDE SEQUENCE [LARGE SCALE GENOMIC DNA]</scope>
    <source>
        <strain>RCC307</strain>
    </source>
</reference>
<evidence type="ECO:0000255" key="1">
    <source>
        <dbReference type="HAMAP-Rule" id="MF_01303"/>
    </source>
</evidence>
<comment type="function">
    <text evidence="1">Apoprotein for the two 4Fe-4S centers FA and FB of photosystem I (PSI); essential for photochemical activity. FB is the terminal electron acceptor of PSI, donating electrons to ferredoxin. The C-terminus interacts with PsaA/B/D and helps assemble the protein into the PSI complex. Required for binding of PsaD and PsaE to PSI. PSI is a plastocyanin/cytochrome c6-ferredoxin oxidoreductase, converting photonic excitation into a charge separation, which transfers an electron from the donor P700 chlorophyll pair to the spectroscopically characterized acceptors A0, A1, FX, FA and FB in turn.</text>
</comment>
<comment type="catalytic activity">
    <reaction evidence="1">
        <text>reduced [plastocyanin] + hnu + oxidized [2Fe-2S]-[ferredoxin] = oxidized [plastocyanin] + reduced [2Fe-2S]-[ferredoxin]</text>
        <dbReference type="Rhea" id="RHEA:30407"/>
        <dbReference type="Rhea" id="RHEA-COMP:10000"/>
        <dbReference type="Rhea" id="RHEA-COMP:10001"/>
        <dbReference type="Rhea" id="RHEA-COMP:10039"/>
        <dbReference type="Rhea" id="RHEA-COMP:10040"/>
        <dbReference type="ChEBI" id="CHEBI:29036"/>
        <dbReference type="ChEBI" id="CHEBI:30212"/>
        <dbReference type="ChEBI" id="CHEBI:33737"/>
        <dbReference type="ChEBI" id="CHEBI:33738"/>
        <dbReference type="ChEBI" id="CHEBI:49552"/>
        <dbReference type="EC" id="1.97.1.12"/>
    </reaction>
</comment>
<comment type="cofactor">
    <cofactor evidence="1">
        <name>[4Fe-4S] cluster</name>
        <dbReference type="ChEBI" id="CHEBI:49883"/>
    </cofactor>
    <text evidence="1">Binds 2 [4Fe-4S] clusters. Cluster 2 is most probably the spectroscopically characterized electron acceptor FA and cluster 1 is most probably FB.</text>
</comment>
<comment type="subunit">
    <text evidence="1">The cyanobacterial PSI reaction center is composed of one copy each of PsaA,B,C,D,E,F,I,J,K,L,M and X, and forms trimeric complexes.</text>
</comment>
<comment type="subcellular location">
    <subcellularLocation>
        <location evidence="1">Cellular thylakoid membrane</location>
        <topology evidence="1">Peripheral membrane protein</topology>
        <orientation evidence="1">Cytoplasmic side</orientation>
    </subcellularLocation>
</comment>
<dbReference type="EC" id="1.97.1.12" evidence="1"/>
<dbReference type="EMBL" id="CT978603">
    <property type="protein sequence ID" value="CAK27036.1"/>
    <property type="molecule type" value="Genomic_DNA"/>
</dbReference>
<dbReference type="SMR" id="A5GQ77"/>
<dbReference type="STRING" id="316278.SynRCC307_0133"/>
<dbReference type="KEGG" id="syr:SynRCC307_0133"/>
<dbReference type="eggNOG" id="COG1143">
    <property type="taxonomic scope" value="Bacteria"/>
</dbReference>
<dbReference type="HOGENOM" id="CLU_139698_8_0_3"/>
<dbReference type="OrthoDB" id="9804603at2"/>
<dbReference type="Proteomes" id="UP000001115">
    <property type="component" value="Chromosome"/>
</dbReference>
<dbReference type="GO" id="GO:0009522">
    <property type="term" value="C:photosystem I"/>
    <property type="evidence" value="ECO:0007669"/>
    <property type="project" value="UniProtKB-KW"/>
</dbReference>
<dbReference type="GO" id="GO:0031676">
    <property type="term" value="C:plasma membrane-derived thylakoid membrane"/>
    <property type="evidence" value="ECO:0007669"/>
    <property type="project" value="UniProtKB-SubCell"/>
</dbReference>
<dbReference type="GO" id="GO:0051539">
    <property type="term" value="F:4 iron, 4 sulfur cluster binding"/>
    <property type="evidence" value="ECO:0007669"/>
    <property type="project" value="UniProtKB-KW"/>
</dbReference>
<dbReference type="GO" id="GO:0009055">
    <property type="term" value="F:electron transfer activity"/>
    <property type="evidence" value="ECO:0007669"/>
    <property type="project" value="UniProtKB-UniRule"/>
</dbReference>
<dbReference type="GO" id="GO:0046872">
    <property type="term" value="F:metal ion binding"/>
    <property type="evidence" value="ECO:0007669"/>
    <property type="project" value="UniProtKB-KW"/>
</dbReference>
<dbReference type="GO" id="GO:0016491">
    <property type="term" value="F:oxidoreductase activity"/>
    <property type="evidence" value="ECO:0007669"/>
    <property type="project" value="UniProtKB-KW"/>
</dbReference>
<dbReference type="GO" id="GO:0009773">
    <property type="term" value="P:photosynthetic electron transport in photosystem I"/>
    <property type="evidence" value="ECO:0007669"/>
    <property type="project" value="InterPro"/>
</dbReference>
<dbReference type="FunFam" id="3.30.70.20:FF:000001">
    <property type="entry name" value="Photosystem I iron-sulfur center"/>
    <property type="match status" value="1"/>
</dbReference>
<dbReference type="Gene3D" id="3.30.70.20">
    <property type="match status" value="1"/>
</dbReference>
<dbReference type="HAMAP" id="MF_01303">
    <property type="entry name" value="PSI_PsaC"/>
    <property type="match status" value="1"/>
</dbReference>
<dbReference type="InterPro" id="IPR017896">
    <property type="entry name" value="4Fe4S_Fe-S-bd"/>
</dbReference>
<dbReference type="InterPro" id="IPR017900">
    <property type="entry name" value="4Fe4S_Fe_S_CS"/>
</dbReference>
<dbReference type="InterPro" id="IPR050157">
    <property type="entry name" value="PSI_iron-sulfur_center"/>
</dbReference>
<dbReference type="InterPro" id="IPR017491">
    <property type="entry name" value="PSI_PsaC"/>
</dbReference>
<dbReference type="NCBIfam" id="TIGR03048">
    <property type="entry name" value="PS_I_psaC"/>
    <property type="match status" value="1"/>
</dbReference>
<dbReference type="PANTHER" id="PTHR24960:SF79">
    <property type="entry name" value="PHOTOSYSTEM I IRON-SULFUR CENTER"/>
    <property type="match status" value="1"/>
</dbReference>
<dbReference type="PANTHER" id="PTHR24960">
    <property type="entry name" value="PHOTOSYSTEM I IRON-SULFUR CENTER-RELATED"/>
    <property type="match status" value="1"/>
</dbReference>
<dbReference type="Pfam" id="PF12838">
    <property type="entry name" value="Fer4_7"/>
    <property type="match status" value="1"/>
</dbReference>
<dbReference type="SUPFAM" id="SSF54862">
    <property type="entry name" value="4Fe-4S ferredoxins"/>
    <property type="match status" value="1"/>
</dbReference>
<dbReference type="PROSITE" id="PS00198">
    <property type="entry name" value="4FE4S_FER_1"/>
    <property type="match status" value="2"/>
</dbReference>
<dbReference type="PROSITE" id="PS51379">
    <property type="entry name" value="4FE4S_FER_2"/>
    <property type="match status" value="2"/>
</dbReference>